<name>CARB_STAAN</name>
<reference key="1">
    <citation type="journal article" date="2001" name="Lancet">
        <title>Whole genome sequencing of meticillin-resistant Staphylococcus aureus.</title>
        <authorList>
            <person name="Kuroda M."/>
            <person name="Ohta T."/>
            <person name="Uchiyama I."/>
            <person name="Baba T."/>
            <person name="Yuzawa H."/>
            <person name="Kobayashi I."/>
            <person name="Cui L."/>
            <person name="Oguchi A."/>
            <person name="Aoki K."/>
            <person name="Nagai Y."/>
            <person name="Lian J.-Q."/>
            <person name="Ito T."/>
            <person name="Kanamori M."/>
            <person name="Matsumaru H."/>
            <person name="Maruyama A."/>
            <person name="Murakami H."/>
            <person name="Hosoyama A."/>
            <person name="Mizutani-Ui Y."/>
            <person name="Takahashi N.K."/>
            <person name="Sawano T."/>
            <person name="Inoue R."/>
            <person name="Kaito C."/>
            <person name="Sekimizu K."/>
            <person name="Hirakawa H."/>
            <person name="Kuhara S."/>
            <person name="Goto S."/>
            <person name="Yabuzaki J."/>
            <person name="Kanehisa M."/>
            <person name="Yamashita A."/>
            <person name="Oshima K."/>
            <person name="Furuya K."/>
            <person name="Yoshino C."/>
            <person name="Shiba T."/>
            <person name="Hattori M."/>
            <person name="Ogasawara N."/>
            <person name="Hayashi H."/>
            <person name="Hiramatsu K."/>
        </authorList>
    </citation>
    <scope>NUCLEOTIDE SEQUENCE [LARGE SCALE GENOMIC DNA]</scope>
    <source>
        <strain>N315</strain>
    </source>
</reference>
<reference key="2">
    <citation type="submission" date="2005-11" db="UniProtKB">
        <title>Shotgun proteomic analysis of total protein extract of S. aureus S30 versus N315.</title>
        <authorList>
            <person name="Stenz L."/>
        </authorList>
    </citation>
    <scope>IDENTIFICATION BY MASS SPECTROMETRY</scope>
</reference>
<reference key="3">
    <citation type="submission" date="2007-10" db="UniProtKB">
        <title>Shotgun proteomic analysis of total and membrane protein extracts of S. aureus strain N315.</title>
        <authorList>
            <person name="Vaezzadeh A.R."/>
            <person name="Deshusses J."/>
            <person name="Lescuyer P."/>
            <person name="Hochstrasser D.F."/>
        </authorList>
    </citation>
    <scope>IDENTIFICATION BY MASS SPECTROMETRY [LARGE SCALE ANALYSIS]</scope>
    <source>
        <strain>N315</strain>
    </source>
</reference>
<proteinExistence type="evidence at protein level"/>
<feature type="chain" id="PRO_0000145039" description="Carbamoyl phosphate synthase large chain">
    <location>
        <begin position="1"/>
        <end position="1057"/>
    </location>
</feature>
<feature type="domain" description="ATP-grasp 1" evidence="1">
    <location>
        <begin position="133"/>
        <end position="327"/>
    </location>
</feature>
<feature type="domain" description="ATP-grasp 2" evidence="1">
    <location>
        <begin position="671"/>
        <end position="861"/>
    </location>
</feature>
<feature type="domain" description="MGS-like" evidence="1">
    <location>
        <begin position="930"/>
        <end position="1057"/>
    </location>
</feature>
<feature type="region of interest" description="Carboxyphosphate synthetic domain" evidence="1">
    <location>
        <begin position="1"/>
        <end position="401"/>
    </location>
</feature>
<feature type="region of interest" description="Oligomerization domain" evidence="1">
    <location>
        <begin position="402"/>
        <end position="546"/>
    </location>
</feature>
<feature type="region of interest" description="Carbamoyl phosphate synthetic domain" evidence="1">
    <location>
        <begin position="547"/>
        <end position="929"/>
    </location>
</feature>
<feature type="region of interest" description="Allosteric domain" evidence="1">
    <location>
        <begin position="930"/>
        <end position="1057"/>
    </location>
</feature>
<feature type="binding site" evidence="1">
    <location>
        <position position="129"/>
    </location>
    <ligand>
        <name>ATP</name>
        <dbReference type="ChEBI" id="CHEBI:30616"/>
        <label>1</label>
    </ligand>
</feature>
<feature type="binding site" evidence="1">
    <location>
        <position position="169"/>
    </location>
    <ligand>
        <name>ATP</name>
        <dbReference type="ChEBI" id="CHEBI:30616"/>
        <label>1</label>
    </ligand>
</feature>
<feature type="binding site" evidence="1">
    <location>
        <position position="175"/>
    </location>
    <ligand>
        <name>ATP</name>
        <dbReference type="ChEBI" id="CHEBI:30616"/>
        <label>1</label>
    </ligand>
</feature>
<feature type="binding site" evidence="1">
    <location>
        <position position="176"/>
    </location>
    <ligand>
        <name>ATP</name>
        <dbReference type="ChEBI" id="CHEBI:30616"/>
        <label>1</label>
    </ligand>
</feature>
<feature type="binding site" evidence="1">
    <location>
        <position position="208"/>
    </location>
    <ligand>
        <name>ATP</name>
        <dbReference type="ChEBI" id="CHEBI:30616"/>
        <label>1</label>
    </ligand>
</feature>
<feature type="binding site" evidence="1">
    <location>
        <position position="210"/>
    </location>
    <ligand>
        <name>ATP</name>
        <dbReference type="ChEBI" id="CHEBI:30616"/>
        <label>1</label>
    </ligand>
</feature>
<feature type="binding site" evidence="1">
    <location>
        <position position="215"/>
    </location>
    <ligand>
        <name>ATP</name>
        <dbReference type="ChEBI" id="CHEBI:30616"/>
        <label>1</label>
    </ligand>
</feature>
<feature type="binding site" evidence="1">
    <location>
        <position position="241"/>
    </location>
    <ligand>
        <name>ATP</name>
        <dbReference type="ChEBI" id="CHEBI:30616"/>
        <label>1</label>
    </ligand>
</feature>
<feature type="binding site" evidence="1">
    <location>
        <position position="242"/>
    </location>
    <ligand>
        <name>ATP</name>
        <dbReference type="ChEBI" id="CHEBI:30616"/>
        <label>1</label>
    </ligand>
</feature>
<feature type="binding site" evidence="1">
    <location>
        <position position="243"/>
    </location>
    <ligand>
        <name>ATP</name>
        <dbReference type="ChEBI" id="CHEBI:30616"/>
        <label>1</label>
    </ligand>
</feature>
<feature type="binding site" evidence="1">
    <location>
        <position position="284"/>
    </location>
    <ligand>
        <name>ATP</name>
        <dbReference type="ChEBI" id="CHEBI:30616"/>
        <label>1</label>
    </ligand>
</feature>
<feature type="binding site" evidence="1">
    <location>
        <position position="284"/>
    </location>
    <ligand>
        <name>Mg(2+)</name>
        <dbReference type="ChEBI" id="CHEBI:18420"/>
        <label>1</label>
    </ligand>
</feature>
<feature type="binding site" evidence="1">
    <location>
        <position position="284"/>
    </location>
    <ligand>
        <name>Mn(2+)</name>
        <dbReference type="ChEBI" id="CHEBI:29035"/>
        <label>1</label>
    </ligand>
</feature>
<feature type="binding site" evidence="1">
    <location>
        <position position="298"/>
    </location>
    <ligand>
        <name>ATP</name>
        <dbReference type="ChEBI" id="CHEBI:30616"/>
        <label>1</label>
    </ligand>
</feature>
<feature type="binding site" evidence="1">
    <location>
        <position position="298"/>
    </location>
    <ligand>
        <name>Mg(2+)</name>
        <dbReference type="ChEBI" id="CHEBI:18420"/>
        <label>1</label>
    </ligand>
</feature>
<feature type="binding site" evidence="1">
    <location>
        <position position="298"/>
    </location>
    <ligand>
        <name>Mg(2+)</name>
        <dbReference type="ChEBI" id="CHEBI:18420"/>
        <label>2</label>
    </ligand>
</feature>
<feature type="binding site" evidence="1">
    <location>
        <position position="298"/>
    </location>
    <ligand>
        <name>Mn(2+)</name>
        <dbReference type="ChEBI" id="CHEBI:29035"/>
        <label>1</label>
    </ligand>
</feature>
<feature type="binding site" evidence="1">
    <location>
        <position position="298"/>
    </location>
    <ligand>
        <name>Mn(2+)</name>
        <dbReference type="ChEBI" id="CHEBI:29035"/>
        <label>2</label>
    </ligand>
</feature>
<feature type="binding site" evidence="1">
    <location>
        <position position="300"/>
    </location>
    <ligand>
        <name>Mg(2+)</name>
        <dbReference type="ChEBI" id="CHEBI:18420"/>
        <label>2</label>
    </ligand>
</feature>
<feature type="binding site" evidence="1">
    <location>
        <position position="300"/>
    </location>
    <ligand>
        <name>Mn(2+)</name>
        <dbReference type="ChEBI" id="CHEBI:29035"/>
        <label>2</label>
    </ligand>
</feature>
<feature type="binding site" evidence="1">
    <location>
        <position position="707"/>
    </location>
    <ligand>
        <name>ATP</name>
        <dbReference type="ChEBI" id="CHEBI:30616"/>
        <label>2</label>
    </ligand>
</feature>
<feature type="binding site" evidence="1">
    <location>
        <position position="746"/>
    </location>
    <ligand>
        <name>ATP</name>
        <dbReference type="ChEBI" id="CHEBI:30616"/>
        <label>2</label>
    </ligand>
</feature>
<feature type="binding site" evidence="1">
    <location>
        <position position="748"/>
    </location>
    <ligand>
        <name>ATP</name>
        <dbReference type="ChEBI" id="CHEBI:30616"/>
        <label>2</label>
    </ligand>
</feature>
<feature type="binding site" evidence="1">
    <location>
        <position position="752"/>
    </location>
    <ligand>
        <name>ATP</name>
        <dbReference type="ChEBI" id="CHEBI:30616"/>
        <label>2</label>
    </ligand>
</feature>
<feature type="binding site" evidence="1">
    <location>
        <position position="777"/>
    </location>
    <ligand>
        <name>ATP</name>
        <dbReference type="ChEBI" id="CHEBI:30616"/>
        <label>2</label>
    </ligand>
</feature>
<feature type="binding site" evidence="1">
    <location>
        <position position="778"/>
    </location>
    <ligand>
        <name>ATP</name>
        <dbReference type="ChEBI" id="CHEBI:30616"/>
        <label>2</label>
    </ligand>
</feature>
<feature type="binding site" evidence="1">
    <location>
        <position position="779"/>
    </location>
    <ligand>
        <name>ATP</name>
        <dbReference type="ChEBI" id="CHEBI:30616"/>
        <label>2</label>
    </ligand>
</feature>
<feature type="binding site" evidence="1">
    <location>
        <position position="780"/>
    </location>
    <ligand>
        <name>ATP</name>
        <dbReference type="ChEBI" id="CHEBI:30616"/>
        <label>2</label>
    </ligand>
</feature>
<feature type="binding site" evidence="1">
    <location>
        <position position="820"/>
    </location>
    <ligand>
        <name>ATP</name>
        <dbReference type="ChEBI" id="CHEBI:30616"/>
        <label>2</label>
    </ligand>
</feature>
<feature type="binding site" evidence="1">
    <location>
        <position position="820"/>
    </location>
    <ligand>
        <name>Mg(2+)</name>
        <dbReference type="ChEBI" id="CHEBI:18420"/>
        <label>3</label>
    </ligand>
</feature>
<feature type="binding site" evidence="1">
    <location>
        <position position="820"/>
    </location>
    <ligand>
        <name>Mn(2+)</name>
        <dbReference type="ChEBI" id="CHEBI:29035"/>
        <label>3</label>
    </ligand>
</feature>
<feature type="binding site" evidence="1">
    <location>
        <position position="832"/>
    </location>
    <ligand>
        <name>ATP</name>
        <dbReference type="ChEBI" id="CHEBI:30616"/>
        <label>2</label>
    </ligand>
</feature>
<feature type="binding site" evidence="1">
    <location>
        <position position="832"/>
    </location>
    <ligand>
        <name>Mg(2+)</name>
        <dbReference type="ChEBI" id="CHEBI:18420"/>
        <label>3</label>
    </ligand>
</feature>
<feature type="binding site" evidence="1">
    <location>
        <position position="832"/>
    </location>
    <ligand>
        <name>Mg(2+)</name>
        <dbReference type="ChEBI" id="CHEBI:18420"/>
        <label>4</label>
    </ligand>
</feature>
<feature type="binding site" evidence="1">
    <location>
        <position position="832"/>
    </location>
    <ligand>
        <name>Mn(2+)</name>
        <dbReference type="ChEBI" id="CHEBI:29035"/>
        <label>3</label>
    </ligand>
</feature>
<feature type="binding site" evidence="1">
    <location>
        <position position="832"/>
    </location>
    <ligand>
        <name>Mn(2+)</name>
        <dbReference type="ChEBI" id="CHEBI:29035"/>
        <label>4</label>
    </ligand>
</feature>
<feature type="binding site" evidence="1">
    <location>
        <position position="834"/>
    </location>
    <ligand>
        <name>Mg(2+)</name>
        <dbReference type="ChEBI" id="CHEBI:18420"/>
        <label>4</label>
    </ligand>
</feature>
<feature type="binding site" evidence="1">
    <location>
        <position position="834"/>
    </location>
    <ligand>
        <name>Mn(2+)</name>
        <dbReference type="ChEBI" id="CHEBI:29035"/>
        <label>4</label>
    </ligand>
</feature>
<protein>
    <recommendedName>
        <fullName evidence="1">Carbamoyl phosphate synthase large chain</fullName>
        <ecNumber evidence="1">6.3.4.16</ecNumber>
        <ecNumber evidence="1">6.3.5.5</ecNumber>
    </recommendedName>
    <alternativeName>
        <fullName evidence="1">Carbamoyl phosphate synthetase ammonia chain</fullName>
    </alternativeName>
</protein>
<comment type="function">
    <text evidence="1">Large subunit of the glutamine-dependent carbamoyl phosphate synthetase (CPSase). CPSase catalyzes the formation of carbamoyl phosphate from the ammonia moiety of glutamine, carbonate, and phosphate donated by ATP, constituting the first step of 2 biosynthetic pathways, one leading to arginine and/or urea and the other to pyrimidine nucleotides. The large subunit (synthetase) binds the substrates ammonia (free or transferred from glutamine from the small subunit), hydrogencarbonate and ATP and carries out an ATP-coupled ligase reaction, activating hydrogencarbonate by forming carboxy phosphate which reacts with ammonia to form carbamoyl phosphate.</text>
</comment>
<comment type="catalytic activity">
    <reaction evidence="1">
        <text>hydrogencarbonate + L-glutamine + 2 ATP + H2O = carbamoyl phosphate + L-glutamate + 2 ADP + phosphate + 2 H(+)</text>
        <dbReference type="Rhea" id="RHEA:18633"/>
        <dbReference type="ChEBI" id="CHEBI:15377"/>
        <dbReference type="ChEBI" id="CHEBI:15378"/>
        <dbReference type="ChEBI" id="CHEBI:17544"/>
        <dbReference type="ChEBI" id="CHEBI:29985"/>
        <dbReference type="ChEBI" id="CHEBI:30616"/>
        <dbReference type="ChEBI" id="CHEBI:43474"/>
        <dbReference type="ChEBI" id="CHEBI:58228"/>
        <dbReference type="ChEBI" id="CHEBI:58359"/>
        <dbReference type="ChEBI" id="CHEBI:456216"/>
        <dbReference type="EC" id="6.3.5.5"/>
    </reaction>
</comment>
<comment type="catalytic activity">
    <molecule>Carbamoyl phosphate synthase large chain</molecule>
    <reaction evidence="1">
        <text>hydrogencarbonate + NH4(+) + 2 ATP = carbamoyl phosphate + 2 ADP + phosphate + 2 H(+)</text>
        <dbReference type="Rhea" id="RHEA:18029"/>
        <dbReference type="ChEBI" id="CHEBI:15378"/>
        <dbReference type="ChEBI" id="CHEBI:17544"/>
        <dbReference type="ChEBI" id="CHEBI:28938"/>
        <dbReference type="ChEBI" id="CHEBI:30616"/>
        <dbReference type="ChEBI" id="CHEBI:43474"/>
        <dbReference type="ChEBI" id="CHEBI:58228"/>
        <dbReference type="ChEBI" id="CHEBI:456216"/>
        <dbReference type="EC" id="6.3.4.16"/>
    </reaction>
</comment>
<comment type="cofactor">
    <cofactor evidence="1">
        <name>Mg(2+)</name>
        <dbReference type="ChEBI" id="CHEBI:18420"/>
    </cofactor>
    <cofactor evidence="1">
        <name>Mn(2+)</name>
        <dbReference type="ChEBI" id="CHEBI:29035"/>
    </cofactor>
    <text evidence="1">Binds 4 Mg(2+) or Mn(2+) ions per subunit.</text>
</comment>
<comment type="pathway">
    <text evidence="1">Amino-acid biosynthesis; L-arginine biosynthesis; carbamoyl phosphate from bicarbonate: step 1/1.</text>
</comment>
<comment type="pathway">
    <text evidence="1">Pyrimidine metabolism; UMP biosynthesis via de novo pathway; (S)-dihydroorotate from bicarbonate: step 1/3.</text>
</comment>
<comment type="subunit">
    <text evidence="1">Composed of two chains; the small (or glutamine) chain promotes the hydrolysis of glutamine to ammonia, which is used by the large (or ammonia) chain to synthesize carbamoyl phosphate. Tetramer of heterodimers (alpha,beta)4.</text>
</comment>
<comment type="domain">
    <text evidence="1">The large subunit is composed of 2 ATP-grasp domains that are involved in binding the 2 ATP molecules needed for carbamoyl phosphate synthesis. The N-terminal ATP-grasp domain (referred to as the carboxyphosphate synthetic component) catalyzes the ATP-dependent phosphorylation of hydrogencarbonate to carboxyphosphate and the subsequent nucleophilic attack by ammonia to form a carbamate intermediate. The C-terminal ATP-grasp domain (referred to as the carbamoyl phosphate synthetic component) then catalyzes the phosphorylation of carbamate with the second ATP to form the end product carbamoyl phosphate. The reactive and unstable enzyme intermediates are sequentially channeled from one active site to the next through the interior of the protein over a distance of at least 96 A.</text>
</comment>
<comment type="similarity">
    <text evidence="1">Belongs to the CarB family.</text>
</comment>
<keyword id="KW-0028">Amino-acid biosynthesis</keyword>
<keyword id="KW-0055">Arginine biosynthesis</keyword>
<keyword id="KW-0067">ATP-binding</keyword>
<keyword id="KW-0436">Ligase</keyword>
<keyword id="KW-0460">Magnesium</keyword>
<keyword id="KW-0464">Manganese</keyword>
<keyword id="KW-0479">Metal-binding</keyword>
<keyword id="KW-0547">Nucleotide-binding</keyword>
<keyword id="KW-0665">Pyrimidine biosynthesis</keyword>
<keyword id="KW-0677">Repeat</keyword>
<accession>P63740</accession>
<accession>Q99UR5</accession>
<dbReference type="EC" id="6.3.4.16" evidence="1"/>
<dbReference type="EC" id="6.3.5.5" evidence="1"/>
<dbReference type="EMBL" id="BA000018">
    <property type="protein sequence ID" value="BAB42298.1"/>
    <property type="molecule type" value="Genomic_DNA"/>
</dbReference>
<dbReference type="PIR" id="F89892">
    <property type="entry name" value="F89892"/>
</dbReference>
<dbReference type="RefSeq" id="WP_001126259.1">
    <property type="nucleotide sequence ID" value="NC_002745.2"/>
</dbReference>
<dbReference type="SMR" id="P63740"/>
<dbReference type="EnsemblBacteria" id="BAB42298">
    <property type="protein sequence ID" value="BAB42298"/>
    <property type="gene ID" value="BAB42298"/>
</dbReference>
<dbReference type="KEGG" id="sau:SA1046"/>
<dbReference type="HOGENOM" id="CLU_000513_1_2_9"/>
<dbReference type="UniPathway" id="UPA00068">
    <property type="reaction ID" value="UER00171"/>
</dbReference>
<dbReference type="UniPathway" id="UPA00070">
    <property type="reaction ID" value="UER00115"/>
</dbReference>
<dbReference type="GO" id="GO:0005737">
    <property type="term" value="C:cytoplasm"/>
    <property type="evidence" value="ECO:0007669"/>
    <property type="project" value="TreeGrafter"/>
</dbReference>
<dbReference type="GO" id="GO:0005524">
    <property type="term" value="F:ATP binding"/>
    <property type="evidence" value="ECO:0007669"/>
    <property type="project" value="UniProtKB-UniRule"/>
</dbReference>
<dbReference type="GO" id="GO:0004087">
    <property type="term" value="F:carbamoyl-phosphate synthase (ammonia) activity"/>
    <property type="evidence" value="ECO:0007669"/>
    <property type="project" value="RHEA"/>
</dbReference>
<dbReference type="GO" id="GO:0004088">
    <property type="term" value="F:carbamoyl-phosphate synthase (glutamine-hydrolyzing) activity"/>
    <property type="evidence" value="ECO:0007669"/>
    <property type="project" value="UniProtKB-UniRule"/>
</dbReference>
<dbReference type="GO" id="GO:0046872">
    <property type="term" value="F:metal ion binding"/>
    <property type="evidence" value="ECO:0007669"/>
    <property type="project" value="UniProtKB-KW"/>
</dbReference>
<dbReference type="GO" id="GO:0044205">
    <property type="term" value="P:'de novo' UMP biosynthetic process"/>
    <property type="evidence" value="ECO:0007669"/>
    <property type="project" value="UniProtKB-UniRule"/>
</dbReference>
<dbReference type="GO" id="GO:0006541">
    <property type="term" value="P:glutamine metabolic process"/>
    <property type="evidence" value="ECO:0007669"/>
    <property type="project" value="TreeGrafter"/>
</dbReference>
<dbReference type="GO" id="GO:0006526">
    <property type="term" value="P:L-arginine biosynthetic process"/>
    <property type="evidence" value="ECO:0007669"/>
    <property type="project" value="UniProtKB-UniRule"/>
</dbReference>
<dbReference type="CDD" id="cd01424">
    <property type="entry name" value="MGS_CPS_II"/>
    <property type="match status" value="1"/>
</dbReference>
<dbReference type="FunFam" id="1.10.1030.10:FF:000002">
    <property type="entry name" value="Carbamoyl-phosphate synthase large chain"/>
    <property type="match status" value="1"/>
</dbReference>
<dbReference type="FunFam" id="3.30.1490.20:FF:000001">
    <property type="entry name" value="Carbamoyl-phosphate synthase large chain"/>
    <property type="match status" value="1"/>
</dbReference>
<dbReference type="FunFam" id="3.30.470.20:FF:000001">
    <property type="entry name" value="Carbamoyl-phosphate synthase large chain"/>
    <property type="match status" value="1"/>
</dbReference>
<dbReference type="FunFam" id="3.30.470.20:FF:000026">
    <property type="entry name" value="Carbamoyl-phosphate synthase large chain"/>
    <property type="match status" value="1"/>
</dbReference>
<dbReference type="FunFam" id="3.40.50.1380:FF:000011">
    <property type="entry name" value="Carbamoyl-phosphate synthase large chain"/>
    <property type="match status" value="1"/>
</dbReference>
<dbReference type="FunFam" id="3.40.50.20:FF:000001">
    <property type="entry name" value="Carbamoyl-phosphate synthase large chain"/>
    <property type="match status" value="2"/>
</dbReference>
<dbReference type="Gene3D" id="3.40.50.20">
    <property type="match status" value="2"/>
</dbReference>
<dbReference type="Gene3D" id="3.30.1490.20">
    <property type="entry name" value="ATP-grasp fold, A domain"/>
    <property type="match status" value="1"/>
</dbReference>
<dbReference type="Gene3D" id="3.30.470.20">
    <property type="entry name" value="ATP-grasp fold, B domain"/>
    <property type="match status" value="2"/>
</dbReference>
<dbReference type="Gene3D" id="1.10.1030.10">
    <property type="entry name" value="Carbamoyl-phosphate synthetase, large subunit oligomerisation domain"/>
    <property type="match status" value="1"/>
</dbReference>
<dbReference type="Gene3D" id="3.40.50.1380">
    <property type="entry name" value="Methylglyoxal synthase-like domain"/>
    <property type="match status" value="1"/>
</dbReference>
<dbReference type="HAMAP" id="MF_01210_A">
    <property type="entry name" value="CPSase_L_chain_A"/>
    <property type="match status" value="1"/>
</dbReference>
<dbReference type="HAMAP" id="MF_01210_B">
    <property type="entry name" value="CPSase_L_chain_B"/>
    <property type="match status" value="1"/>
</dbReference>
<dbReference type="InterPro" id="IPR011761">
    <property type="entry name" value="ATP-grasp"/>
</dbReference>
<dbReference type="InterPro" id="IPR013815">
    <property type="entry name" value="ATP_grasp_subdomain_1"/>
</dbReference>
<dbReference type="InterPro" id="IPR006275">
    <property type="entry name" value="CarbamoylP_synth_lsu"/>
</dbReference>
<dbReference type="InterPro" id="IPR005480">
    <property type="entry name" value="CarbamoylP_synth_lsu_oligo"/>
</dbReference>
<dbReference type="InterPro" id="IPR036897">
    <property type="entry name" value="CarbamoylP_synth_lsu_oligo_sf"/>
</dbReference>
<dbReference type="InterPro" id="IPR005479">
    <property type="entry name" value="CbamoylP_synth_lsu-like_ATP-bd"/>
</dbReference>
<dbReference type="InterPro" id="IPR005483">
    <property type="entry name" value="CbamoylP_synth_lsu_CPSase_dom"/>
</dbReference>
<dbReference type="InterPro" id="IPR011607">
    <property type="entry name" value="MGS-like_dom"/>
</dbReference>
<dbReference type="InterPro" id="IPR036914">
    <property type="entry name" value="MGS-like_dom_sf"/>
</dbReference>
<dbReference type="InterPro" id="IPR033937">
    <property type="entry name" value="MGS_CPS_CarB"/>
</dbReference>
<dbReference type="InterPro" id="IPR016185">
    <property type="entry name" value="PreATP-grasp_dom_sf"/>
</dbReference>
<dbReference type="NCBIfam" id="TIGR01369">
    <property type="entry name" value="CPSaseII_lrg"/>
    <property type="match status" value="1"/>
</dbReference>
<dbReference type="NCBIfam" id="NF003671">
    <property type="entry name" value="PRK05294.1"/>
    <property type="match status" value="1"/>
</dbReference>
<dbReference type="NCBIfam" id="NF009455">
    <property type="entry name" value="PRK12815.1"/>
    <property type="match status" value="1"/>
</dbReference>
<dbReference type="PANTHER" id="PTHR11405:SF53">
    <property type="entry name" value="CARBAMOYL-PHOSPHATE SYNTHASE [AMMONIA], MITOCHONDRIAL"/>
    <property type="match status" value="1"/>
</dbReference>
<dbReference type="PANTHER" id="PTHR11405">
    <property type="entry name" value="CARBAMOYLTRANSFERASE FAMILY MEMBER"/>
    <property type="match status" value="1"/>
</dbReference>
<dbReference type="Pfam" id="PF02786">
    <property type="entry name" value="CPSase_L_D2"/>
    <property type="match status" value="2"/>
</dbReference>
<dbReference type="Pfam" id="PF02787">
    <property type="entry name" value="CPSase_L_D3"/>
    <property type="match status" value="1"/>
</dbReference>
<dbReference type="Pfam" id="PF02142">
    <property type="entry name" value="MGS"/>
    <property type="match status" value="1"/>
</dbReference>
<dbReference type="PRINTS" id="PR00098">
    <property type="entry name" value="CPSASE"/>
</dbReference>
<dbReference type="SMART" id="SM01096">
    <property type="entry name" value="CPSase_L_D3"/>
    <property type="match status" value="1"/>
</dbReference>
<dbReference type="SMART" id="SM01209">
    <property type="entry name" value="GARS_A"/>
    <property type="match status" value="1"/>
</dbReference>
<dbReference type="SMART" id="SM00851">
    <property type="entry name" value="MGS"/>
    <property type="match status" value="1"/>
</dbReference>
<dbReference type="SUPFAM" id="SSF48108">
    <property type="entry name" value="Carbamoyl phosphate synthetase, large subunit connection domain"/>
    <property type="match status" value="1"/>
</dbReference>
<dbReference type="SUPFAM" id="SSF56059">
    <property type="entry name" value="Glutathione synthetase ATP-binding domain-like"/>
    <property type="match status" value="2"/>
</dbReference>
<dbReference type="SUPFAM" id="SSF52335">
    <property type="entry name" value="Methylglyoxal synthase-like"/>
    <property type="match status" value="1"/>
</dbReference>
<dbReference type="SUPFAM" id="SSF52440">
    <property type="entry name" value="PreATP-grasp domain"/>
    <property type="match status" value="2"/>
</dbReference>
<dbReference type="PROSITE" id="PS50975">
    <property type="entry name" value="ATP_GRASP"/>
    <property type="match status" value="2"/>
</dbReference>
<dbReference type="PROSITE" id="PS00866">
    <property type="entry name" value="CPSASE_1"/>
    <property type="match status" value="2"/>
</dbReference>
<dbReference type="PROSITE" id="PS00867">
    <property type="entry name" value="CPSASE_2"/>
    <property type="match status" value="2"/>
</dbReference>
<dbReference type="PROSITE" id="PS51855">
    <property type="entry name" value="MGS"/>
    <property type="match status" value="1"/>
</dbReference>
<gene>
    <name evidence="1" type="primary">carB</name>
    <name type="synonym">pyrAB</name>
    <name type="ordered locus">SA1046</name>
</gene>
<organism>
    <name type="scientific">Staphylococcus aureus (strain N315)</name>
    <dbReference type="NCBI Taxonomy" id="158879"/>
    <lineage>
        <taxon>Bacteria</taxon>
        <taxon>Bacillati</taxon>
        <taxon>Bacillota</taxon>
        <taxon>Bacilli</taxon>
        <taxon>Bacillales</taxon>
        <taxon>Staphylococcaceae</taxon>
        <taxon>Staphylococcus</taxon>
    </lineage>
</organism>
<sequence>MPKRNDIKTILVIGSGPIIIGQAAEFDYAGTQACLALKEEGYRVILVNSNPATIMTDKEIADKVYIEPLTHDFIARIIRKEQPDALLPTLGGQTGLNMAIQLHESGVLQDNNVQLLGTELTSIQQAEDREMFRTLMNDLNVPVPESDIVNTVEQAFKFKEQVGYPLIVRPAFTMGGTGGGICHNDEELHEIVSNGLHYSPATQCLLEKSIAGFKEIEYEVMRDKNDNAIVVCNMENIDPVGIHTGDSIVVAPSQTLSDVEYQMLRDVSLKVIRALGIEGGCNVQLALDPHSFDYYIIEVNPRVSRSSALASKATGYPIAKLAAKIAVGLTLDEMLNPITGTSYAAFEPTLDYVISKIPRFPFDKFEKGERELGTQMKATGEVMAIGRTYEESLLKAIRSLEYGVHHLGLPNGESFDLDYIKERISHQDDERLFFIGEAIRRGTTLEEIHNMTQIDYFFLHKFQNIIDIEHQLKEHQGDLEYLKYAKDYGFSDKTIAHRFNMTEEEVYQLRMENDIKPVYKMVDTCAAEFESSTPYYYGTYETENESIVTDKEKILVLGSGPIRIGQGVEFDYATVHAVWAIQKAGYEAIIVNNNPETVSTDFSISDKLYFEPLTEEDVMNIINLEKPKGVVVQFGGQTAINLADKLAKHGVKILGTSLENLNRAEDRKEFEALLRKINVPQPQGKSATSPEEALANAAEIGYPVVVRPSYVLGGRAMEIVDNDKELENYMTQAVKASPEHPVLVDRYLTGKEIEVDAICDGETVIIPGIMEHIERAGVHSGDSIAVYPPQTLTEDELATLEDYTIKLAKGLNIIGLINIQFVIAHDGVYVLEVNPRSSRTVPFLSKITDIPMAQLAMRAIIGEKLTDMGYQEGVQPYAEGVFVKAPVFSFNKLKNVDITLGPEMKSTGEVMGKDTTLEKALFKGLTGSGVEVKDHGTVLMTVSDKDKEEVVKLAQRLNEVGYKILATSGTANKLAEYDIPAEVVGKIGGENDLLTRIQNGDVQIVINTMTKGKEVERDGFQIRRTTVENGIPCLTSLDTANALTNVIESMTFTMRQM</sequence>
<evidence type="ECO:0000255" key="1">
    <source>
        <dbReference type="HAMAP-Rule" id="MF_01210"/>
    </source>
</evidence>